<comment type="function">
    <text evidence="1">mRNA-binding protein involved in proper cytoplasmic distribution of mitochondria.</text>
</comment>
<comment type="subunit">
    <text evidence="1">May associate with the eukaryotic translation initiation factor 3 (eIF-3) complex.</text>
</comment>
<comment type="subcellular location">
    <subcellularLocation>
        <location evidence="1">Cytoplasm</location>
    </subcellularLocation>
</comment>
<comment type="similarity">
    <text evidence="1">Belongs to the CLU family.</text>
</comment>
<reference key="1">
    <citation type="journal article" date="2011" name="PLoS Genet.">
        <title>Genomic analysis of the necrotrophic fungal pathogens Sclerotinia sclerotiorum and Botrytis cinerea.</title>
        <authorList>
            <person name="Amselem J."/>
            <person name="Cuomo C.A."/>
            <person name="van Kan J.A.L."/>
            <person name="Viaud M."/>
            <person name="Benito E.P."/>
            <person name="Couloux A."/>
            <person name="Coutinho P.M."/>
            <person name="de Vries R.P."/>
            <person name="Dyer P.S."/>
            <person name="Fillinger S."/>
            <person name="Fournier E."/>
            <person name="Gout L."/>
            <person name="Hahn M."/>
            <person name="Kohn L."/>
            <person name="Lapalu N."/>
            <person name="Plummer K.M."/>
            <person name="Pradier J.-M."/>
            <person name="Quevillon E."/>
            <person name="Sharon A."/>
            <person name="Simon A."/>
            <person name="ten Have A."/>
            <person name="Tudzynski B."/>
            <person name="Tudzynski P."/>
            <person name="Wincker P."/>
            <person name="Andrew M."/>
            <person name="Anthouard V."/>
            <person name="Beever R.E."/>
            <person name="Beffa R."/>
            <person name="Benoit I."/>
            <person name="Bouzid O."/>
            <person name="Brault B."/>
            <person name="Chen Z."/>
            <person name="Choquer M."/>
            <person name="Collemare J."/>
            <person name="Cotton P."/>
            <person name="Danchin E.G."/>
            <person name="Da Silva C."/>
            <person name="Gautier A."/>
            <person name="Giraud C."/>
            <person name="Giraud T."/>
            <person name="Gonzalez C."/>
            <person name="Grossetete S."/>
            <person name="Gueldener U."/>
            <person name="Henrissat B."/>
            <person name="Howlett B.J."/>
            <person name="Kodira C."/>
            <person name="Kretschmer M."/>
            <person name="Lappartient A."/>
            <person name="Leroch M."/>
            <person name="Levis C."/>
            <person name="Mauceli E."/>
            <person name="Neuveglise C."/>
            <person name="Oeser B."/>
            <person name="Pearson M."/>
            <person name="Poulain J."/>
            <person name="Poussereau N."/>
            <person name="Quesneville H."/>
            <person name="Rascle C."/>
            <person name="Schumacher J."/>
            <person name="Segurens B."/>
            <person name="Sexton A."/>
            <person name="Silva E."/>
            <person name="Sirven C."/>
            <person name="Soanes D.M."/>
            <person name="Talbot N.J."/>
            <person name="Templeton M."/>
            <person name="Yandava C."/>
            <person name="Yarden O."/>
            <person name="Zeng Q."/>
            <person name="Rollins J.A."/>
            <person name="Lebrun M.-H."/>
            <person name="Dickman M."/>
        </authorList>
    </citation>
    <scope>NUCLEOTIDE SEQUENCE [LARGE SCALE GENOMIC DNA]</scope>
    <source>
        <strain>B05.10</strain>
    </source>
</reference>
<reference key="2">
    <citation type="journal article" date="2012" name="Eukaryot. Cell">
        <title>Genome update of Botrytis cinerea strains B05.10 and T4.</title>
        <authorList>
            <person name="Staats M."/>
            <person name="van Kan J.A.L."/>
        </authorList>
    </citation>
    <scope>NUCLEOTIDE SEQUENCE [LARGE SCALE GENOMIC DNA]</scope>
    <scope>GENOME REANNOTATION</scope>
    <source>
        <strain>B05.10</strain>
    </source>
</reference>
<reference key="3">
    <citation type="journal article" date="2017" name="Mol. Plant Pathol.">
        <title>A gapless genome sequence of the fungus Botrytis cinerea.</title>
        <authorList>
            <person name="van Kan J.A.L."/>
            <person name="Stassen J.H.M."/>
            <person name="Mosbach A."/>
            <person name="van der Lee T.A.J."/>
            <person name="Faino L."/>
            <person name="Farmer A.D."/>
            <person name="Papasotiriou D.G."/>
            <person name="Zhou S."/>
            <person name="Seidl M.F."/>
            <person name="Cottam E."/>
            <person name="Edel D."/>
            <person name="Hahn M."/>
            <person name="Schwartz D.C."/>
            <person name="Dietrich R.A."/>
            <person name="Widdison S."/>
            <person name="Scalliet G."/>
        </authorList>
    </citation>
    <scope>NUCLEOTIDE SEQUENCE [LARGE SCALE GENOMIC DNA]</scope>
    <scope>GENOME REANNOTATION</scope>
    <source>
        <strain>B05.10</strain>
    </source>
</reference>
<dbReference type="EMBL" id="CP009814">
    <property type="protein sequence ID" value="ATZ54355.1"/>
    <property type="molecule type" value="Genomic_DNA"/>
</dbReference>
<dbReference type="RefSeq" id="XP_001550012.1">
    <property type="nucleotide sequence ID" value="XM_001549962.1"/>
</dbReference>
<dbReference type="SMR" id="A6SFG0"/>
<dbReference type="EnsemblFungi" id="Bcin10g03630.1">
    <property type="protein sequence ID" value="Bcin10p03630.1"/>
    <property type="gene ID" value="Bcin10g03630"/>
</dbReference>
<dbReference type="GeneID" id="5430505"/>
<dbReference type="KEGG" id="bfu:BCIN_10g03630"/>
<dbReference type="VEuPathDB" id="FungiDB:Bcin10g03630"/>
<dbReference type="OrthoDB" id="1414216at2759"/>
<dbReference type="Proteomes" id="UP000001798">
    <property type="component" value="Chromosome bcin10"/>
</dbReference>
<dbReference type="GO" id="GO:0005737">
    <property type="term" value="C:cytoplasm"/>
    <property type="evidence" value="ECO:0007669"/>
    <property type="project" value="UniProtKB-SubCell"/>
</dbReference>
<dbReference type="GO" id="GO:0003729">
    <property type="term" value="F:mRNA binding"/>
    <property type="evidence" value="ECO:0007669"/>
    <property type="project" value="TreeGrafter"/>
</dbReference>
<dbReference type="GO" id="GO:0048312">
    <property type="term" value="P:intracellular distribution of mitochondria"/>
    <property type="evidence" value="ECO:0007669"/>
    <property type="project" value="TreeGrafter"/>
</dbReference>
<dbReference type="GO" id="GO:0007005">
    <property type="term" value="P:mitochondrion organization"/>
    <property type="evidence" value="ECO:0007669"/>
    <property type="project" value="UniProtKB-UniRule"/>
</dbReference>
<dbReference type="CDD" id="cd15466">
    <property type="entry name" value="CLU-central"/>
    <property type="match status" value="1"/>
</dbReference>
<dbReference type="FunFam" id="1.25.40.10:FF:000293">
    <property type="entry name" value="Clustered mitochondria protein homolog"/>
    <property type="match status" value="1"/>
</dbReference>
<dbReference type="FunFam" id="1.25.40.10:FF:000532">
    <property type="entry name" value="Clustered mitochondria protein homolog"/>
    <property type="match status" value="1"/>
</dbReference>
<dbReference type="FunFam" id="3.30.2280.10:FF:000002">
    <property type="entry name" value="Clustered mitochondria protein homolog"/>
    <property type="match status" value="1"/>
</dbReference>
<dbReference type="Gene3D" id="3.30.2280.10">
    <property type="entry name" value="Hypothetical protein (hspc210)"/>
    <property type="match status" value="1"/>
</dbReference>
<dbReference type="Gene3D" id="1.25.40.10">
    <property type="entry name" value="Tetratricopeptide repeat domain"/>
    <property type="match status" value="2"/>
</dbReference>
<dbReference type="HAMAP" id="MF_03013">
    <property type="entry name" value="CLU"/>
    <property type="match status" value="1"/>
</dbReference>
<dbReference type="InterPro" id="IPR033646">
    <property type="entry name" value="CLU-central"/>
</dbReference>
<dbReference type="InterPro" id="IPR025697">
    <property type="entry name" value="CLU_dom"/>
</dbReference>
<dbReference type="InterPro" id="IPR028275">
    <property type="entry name" value="CLU_N"/>
</dbReference>
<dbReference type="InterPro" id="IPR027523">
    <property type="entry name" value="CLU_prot"/>
</dbReference>
<dbReference type="InterPro" id="IPR007967">
    <property type="entry name" value="GSKIP_dom"/>
</dbReference>
<dbReference type="InterPro" id="IPR023231">
    <property type="entry name" value="GSKIP_dom_sf"/>
</dbReference>
<dbReference type="InterPro" id="IPR011990">
    <property type="entry name" value="TPR-like_helical_dom_sf"/>
</dbReference>
<dbReference type="InterPro" id="IPR019734">
    <property type="entry name" value="TPR_rpt"/>
</dbReference>
<dbReference type="PANTHER" id="PTHR12601:SF6">
    <property type="entry name" value="CLUSTERED MITOCHONDRIA PROTEIN HOMOLOG"/>
    <property type="match status" value="1"/>
</dbReference>
<dbReference type="PANTHER" id="PTHR12601">
    <property type="entry name" value="EUKARYOTIC TRANSLATION INITIATION FACTOR 3 SUBUNIT EIF-3"/>
    <property type="match status" value="1"/>
</dbReference>
<dbReference type="Pfam" id="PF13236">
    <property type="entry name" value="CLU"/>
    <property type="match status" value="1"/>
</dbReference>
<dbReference type="Pfam" id="PF15044">
    <property type="entry name" value="CLU_N"/>
    <property type="match status" value="1"/>
</dbReference>
<dbReference type="Pfam" id="PF12807">
    <property type="entry name" value="eIF3_p135"/>
    <property type="match status" value="1"/>
</dbReference>
<dbReference type="Pfam" id="PF05303">
    <property type="entry name" value="GSKIP_dom"/>
    <property type="match status" value="1"/>
</dbReference>
<dbReference type="Pfam" id="PF13374">
    <property type="entry name" value="TPR_10"/>
    <property type="match status" value="2"/>
</dbReference>
<dbReference type="Pfam" id="PF13424">
    <property type="entry name" value="TPR_12"/>
    <property type="match status" value="1"/>
</dbReference>
<dbReference type="SMART" id="SM00028">
    <property type="entry name" value="TPR"/>
    <property type="match status" value="3"/>
</dbReference>
<dbReference type="SUPFAM" id="SSF103107">
    <property type="entry name" value="Hypothetical protein c14orf129, hspc210"/>
    <property type="match status" value="1"/>
</dbReference>
<dbReference type="SUPFAM" id="SSF48452">
    <property type="entry name" value="TPR-like"/>
    <property type="match status" value="2"/>
</dbReference>
<dbReference type="PROSITE" id="PS51823">
    <property type="entry name" value="CLU"/>
    <property type="match status" value="1"/>
</dbReference>
<dbReference type="PROSITE" id="PS50005">
    <property type="entry name" value="TPR"/>
    <property type="match status" value="2"/>
</dbReference>
<dbReference type="PROSITE" id="PS50293">
    <property type="entry name" value="TPR_REGION"/>
    <property type="match status" value="1"/>
</dbReference>
<organism>
    <name type="scientific">Botryotinia fuckeliana (strain B05.10)</name>
    <name type="common">Noble rot fungus</name>
    <name type="synonym">Botrytis cinerea</name>
    <dbReference type="NCBI Taxonomy" id="332648"/>
    <lineage>
        <taxon>Eukaryota</taxon>
        <taxon>Fungi</taxon>
        <taxon>Dikarya</taxon>
        <taxon>Ascomycota</taxon>
        <taxon>Pezizomycotina</taxon>
        <taxon>Leotiomycetes</taxon>
        <taxon>Helotiales</taxon>
        <taxon>Sclerotiniaceae</taxon>
        <taxon>Botrytis</taxon>
    </lineage>
</organism>
<keyword id="KW-0963">Cytoplasm</keyword>
<keyword id="KW-1185">Reference proteome</keyword>
<keyword id="KW-0677">Repeat</keyword>
<keyword id="KW-0802">TPR repeat</keyword>
<feature type="chain" id="PRO_0000366399" description="Clustered mitochondria protein homolog">
    <location>
        <begin position="1"/>
        <end position="1306"/>
    </location>
</feature>
<feature type="domain" description="Clu" evidence="2">
    <location>
        <begin position="336"/>
        <end position="580"/>
    </location>
</feature>
<feature type="repeat" description="TPR 1">
    <location>
        <begin position="1032"/>
        <end position="1065"/>
    </location>
</feature>
<feature type="repeat" description="TPR 2">
    <location>
        <begin position="1074"/>
        <end position="1107"/>
    </location>
</feature>
<feature type="repeat" description="TPR 3">
    <location>
        <begin position="1116"/>
        <end position="1149"/>
    </location>
</feature>
<feature type="region of interest" description="Disordered" evidence="3">
    <location>
        <begin position="1"/>
        <end position="47"/>
    </location>
</feature>
<feature type="region of interest" description="Disordered" evidence="3">
    <location>
        <begin position="630"/>
        <end position="689"/>
    </location>
</feature>
<feature type="region of interest" description="Disordered" evidence="3">
    <location>
        <begin position="912"/>
        <end position="956"/>
    </location>
</feature>
<feature type="region of interest" description="Disordered" evidence="3">
    <location>
        <begin position="1275"/>
        <end position="1306"/>
    </location>
</feature>
<feature type="compositionally biased region" description="Low complexity" evidence="3">
    <location>
        <begin position="1"/>
        <end position="11"/>
    </location>
</feature>
<feature type="compositionally biased region" description="Polar residues" evidence="3">
    <location>
        <begin position="12"/>
        <end position="33"/>
    </location>
</feature>
<feature type="compositionally biased region" description="Basic and acidic residues" evidence="3">
    <location>
        <begin position="656"/>
        <end position="689"/>
    </location>
</feature>
<feature type="compositionally biased region" description="Basic residues" evidence="3">
    <location>
        <begin position="1285"/>
        <end position="1298"/>
    </location>
</feature>
<protein>
    <recommendedName>
        <fullName evidence="1">Clustered mitochondria protein homolog</fullName>
    </recommendedName>
    <alternativeName>
        <fullName evidence="1">Protein TIF31 homolog</fullName>
    </alternativeName>
</protein>
<proteinExistence type="inferred from homology"/>
<name>CLU_BOTFB</name>
<evidence type="ECO:0000255" key="1">
    <source>
        <dbReference type="HAMAP-Rule" id="MF_03013"/>
    </source>
</evidence>
<evidence type="ECO:0000255" key="2">
    <source>
        <dbReference type="PROSITE-ProRule" id="PRU01167"/>
    </source>
</evidence>
<evidence type="ECO:0000256" key="3">
    <source>
        <dbReference type="SAM" id="MobiDB-lite"/>
    </source>
</evidence>
<accession>A6SFG0</accession>
<accession>A0A384JUT2</accession>
<gene>
    <name evidence="1" type="primary">clu1</name>
    <name type="synonym">tif31</name>
    <name type="ORF">BC1G_11770</name>
    <name type="ORF">BCIN_10g03630</name>
</gene>
<sequence>MAVNNEVNNAASETPTDVSSSSQKLATEETALTNGADHEEEDGGEAGGEVFQLTVVLPREPHKIQIIVSSQEAIHDVRQSIIELPGTFQYSCFHLEHKGERINDFVQISEVPGLTADSEIHLVEDPYTEKEARIHIIRVRELIGAAGDRTDTLNGIISGASLLDSVTSKESSQNGTSTAPSHPMVGFDFQGSGNLSTLLPRAQEPGPKTVKSISVSPWNPPPYHLRQKGHLLYLQVTTNEGEQFQITSHVSGFYVNKSSTGKFDPSPKSAPKAHSAHSLLALLSDLSPSFEESFKGLQEYNNAKEPLATFQITNATPSNPWIVPSATAPLVAHQADITRTQENYLIAGIENSETLRDWNEEFQSTRELPKDTVQDRVFRERLTSKLFADYNDAAARGAILVARGEIAPLNPTEGKDAQIFVYNNVFFSFGADGVGTFASEGGDEAARAAVGKDVMGVRMVNQLDIDGLFTPGTVVVDYLGKRIVGQSIVPGIFKQRDPGENQIDYGAVDGKDIVASDEKFVSVFEKLSKALKVKKHAVWDKDAKRHDLEGSIETKGLLGTDGRKYVLDLYRVTPLDITWMEEVGTALDSPKEADAASESAYPHRMTVIRPELVEAYWKVKMREWVNGELERKRQAQKAVEPAAEGKEIEAATEASEPAKSEEPTENGELAKKSESDEAAEPSKPDQERIDIGDFKFALNPDAFSGQQPQTDEEKTEFAEDEQQVRLVCEFLRKTVLPELVKDLKEGDVGFPMDGQSLSRLLHKRGINLRYLGQVATLADGKRLESLRILAVQEMVSRAFKHVAGNYLRYLPIPLTSSCIAHLLNCLLGTDLNAAPKPDVDEAIAALYPEADLKFKEVTPESLKQEIEGQVLRRFRYTLDSTWTAGIKHLQLLREVSLKLGIQLEMKPYHFTKQSQTESAAAPPATNGEATKEAAPTGKSTNGKKKKKNAREASPAAVVSANAASPVTFNPDDILNTVPVIKEASPRSSLAEEALEAGRISLLQDQKKLGQELLLESLSLHEQIYGILHPEVARVYNSLSMLYYQLDEKEAAMELARKAVIVSERTLGVDNAETLLNYLNLGLIAHASGETKLALTYIKHALDLWKVVYGPNHPDSITTINNAAVMLQHLKEYHDSRTWFEASLKICEEVYGKHSINAATLLFQLAQALALDQDSKSAVNRMRESYNIFLTELGAEDKNTKEAEKWLEQLTQNAVSIAKHAKDVQARRNRGIRVSPRVTLGQTQVQPQIGQTVEAAAGRDTPRGLDSRSIDELLKFIEGSDQSNQNKKRPGRSNPKRRGGAAATAGK</sequence>